<sequence>MSLNMFWFLPTHGDGHYLGTEEGSRPVDHGYLQQIAQAADRLGYTGVLIPTGRSCEDAWLVAASMIPVTQRLKFLVALRPSVTSPTVAARQAATLDRLSNGRALFNLVTGSDPQELAGDGVFLDHSERYEASAEFTQVWRRLLLGETVNFNGKHIHVRGAKLLFPPIQQPYPPLYFGGSSDVAQELAAEQVDLYLTWGEPPELVKEKIEQVRAKAAAHGHKIRFGIRLHVIVRETNDEAWQAAERLISHLDDETIAKAQAAFARTDSVGQQRMAALHNGKRDNLEISPNLWAGVGLVRGGAGTALVGDGPTVAARINEYAALGIDSFVLSGYPHLEEAYRVGELLFPHLDVAIPEIPQPQPLNPQGEAVANDFIPRKVAQS</sequence>
<gene>
    <name evidence="1" type="primary">ssuD</name>
    <name type="ordered locus">ECIAI1_0976</name>
</gene>
<accession>B7M864</accession>
<comment type="function">
    <text evidence="1">Catalyzes the desulfonation of aliphatic sulfonates.</text>
</comment>
<comment type="catalytic activity">
    <reaction evidence="1">
        <text>an alkanesulfonate + FMNH2 + O2 = an aldehyde + FMN + sulfite + H2O + 2 H(+)</text>
        <dbReference type="Rhea" id="RHEA:23064"/>
        <dbReference type="ChEBI" id="CHEBI:15377"/>
        <dbReference type="ChEBI" id="CHEBI:15378"/>
        <dbReference type="ChEBI" id="CHEBI:15379"/>
        <dbReference type="ChEBI" id="CHEBI:17359"/>
        <dbReference type="ChEBI" id="CHEBI:17478"/>
        <dbReference type="ChEBI" id="CHEBI:57618"/>
        <dbReference type="ChEBI" id="CHEBI:58210"/>
        <dbReference type="ChEBI" id="CHEBI:134249"/>
        <dbReference type="EC" id="1.14.14.5"/>
    </reaction>
</comment>
<comment type="subunit">
    <text evidence="1">Homotetramer.</text>
</comment>
<comment type="miscellaneous">
    <text evidence="1">FMNH(2) which is absolutely required for this enzymatic reaction, is provided by SsuE.</text>
</comment>
<comment type="similarity">
    <text evidence="1">Belongs to the SsuD family.</text>
</comment>
<name>SSUD_ECO8A</name>
<proteinExistence type="inferred from homology"/>
<keyword id="KW-0285">Flavoprotein</keyword>
<keyword id="KW-0288">FMN</keyword>
<keyword id="KW-0503">Monooxygenase</keyword>
<keyword id="KW-0560">Oxidoreductase</keyword>
<reference key="1">
    <citation type="journal article" date="2009" name="PLoS Genet.">
        <title>Organised genome dynamics in the Escherichia coli species results in highly diverse adaptive paths.</title>
        <authorList>
            <person name="Touchon M."/>
            <person name="Hoede C."/>
            <person name="Tenaillon O."/>
            <person name="Barbe V."/>
            <person name="Baeriswyl S."/>
            <person name="Bidet P."/>
            <person name="Bingen E."/>
            <person name="Bonacorsi S."/>
            <person name="Bouchier C."/>
            <person name="Bouvet O."/>
            <person name="Calteau A."/>
            <person name="Chiapello H."/>
            <person name="Clermont O."/>
            <person name="Cruveiller S."/>
            <person name="Danchin A."/>
            <person name="Diard M."/>
            <person name="Dossat C."/>
            <person name="Karoui M.E."/>
            <person name="Frapy E."/>
            <person name="Garry L."/>
            <person name="Ghigo J.M."/>
            <person name="Gilles A.M."/>
            <person name="Johnson J."/>
            <person name="Le Bouguenec C."/>
            <person name="Lescat M."/>
            <person name="Mangenot S."/>
            <person name="Martinez-Jehanne V."/>
            <person name="Matic I."/>
            <person name="Nassif X."/>
            <person name="Oztas S."/>
            <person name="Petit M.A."/>
            <person name="Pichon C."/>
            <person name="Rouy Z."/>
            <person name="Ruf C.S."/>
            <person name="Schneider D."/>
            <person name="Tourret J."/>
            <person name="Vacherie B."/>
            <person name="Vallenet D."/>
            <person name="Medigue C."/>
            <person name="Rocha E.P.C."/>
            <person name="Denamur E."/>
        </authorList>
    </citation>
    <scope>NUCLEOTIDE SEQUENCE [LARGE SCALE GENOMIC DNA]</scope>
    <source>
        <strain>IAI1</strain>
    </source>
</reference>
<protein>
    <recommendedName>
        <fullName evidence="1">Alkanesulfonate monooxygenase</fullName>
        <ecNumber evidence="1">1.14.14.5</ecNumber>
    </recommendedName>
    <alternativeName>
        <fullName evidence="1">FMNH2-dependent aliphatic sulfonate monooxygenase</fullName>
    </alternativeName>
</protein>
<organism>
    <name type="scientific">Escherichia coli O8 (strain IAI1)</name>
    <dbReference type="NCBI Taxonomy" id="585034"/>
    <lineage>
        <taxon>Bacteria</taxon>
        <taxon>Pseudomonadati</taxon>
        <taxon>Pseudomonadota</taxon>
        <taxon>Gammaproteobacteria</taxon>
        <taxon>Enterobacterales</taxon>
        <taxon>Enterobacteriaceae</taxon>
        <taxon>Escherichia</taxon>
    </lineage>
</organism>
<feature type="chain" id="PRO_1000139619" description="Alkanesulfonate monooxygenase">
    <location>
        <begin position="1"/>
        <end position="381"/>
    </location>
</feature>
<dbReference type="EC" id="1.14.14.5" evidence="1"/>
<dbReference type="EMBL" id="CU928160">
    <property type="protein sequence ID" value="CAQ97840.1"/>
    <property type="molecule type" value="Genomic_DNA"/>
</dbReference>
<dbReference type="RefSeq" id="WP_000055991.1">
    <property type="nucleotide sequence ID" value="NC_011741.1"/>
</dbReference>
<dbReference type="SMR" id="B7M864"/>
<dbReference type="KEGG" id="ecr:ECIAI1_0976"/>
<dbReference type="HOGENOM" id="CLU_027853_1_0_6"/>
<dbReference type="GO" id="GO:0008726">
    <property type="term" value="F:alkanesulfonate monooxygenase activity"/>
    <property type="evidence" value="ECO:0007669"/>
    <property type="project" value="UniProtKB-UniRule"/>
</dbReference>
<dbReference type="GO" id="GO:0046306">
    <property type="term" value="P:alkanesulfonate catabolic process"/>
    <property type="evidence" value="ECO:0007669"/>
    <property type="project" value="TreeGrafter"/>
</dbReference>
<dbReference type="CDD" id="cd01094">
    <property type="entry name" value="Alkanesulfonate_monoxygenase"/>
    <property type="match status" value="1"/>
</dbReference>
<dbReference type="FunFam" id="3.20.20.30:FF:000001">
    <property type="entry name" value="Alkanesulfonate monooxygenase"/>
    <property type="match status" value="1"/>
</dbReference>
<dbReference type="Gene3D" id="3.20.20.30">
    <property type="entry name" value="Luciferase-like domain"/>
    <property type="match status" value="1"/>
</dbReference>
<dbReference type="HAMAP" id="MF_01229">
    <property type="entry name" value="Alkanesulf_monooxygen"/>
    <property type="match status" value="1"/>
</dbReference>
<dbReference type="InterPro" id="IPR019911">
    <property type="entry name" value="Alkanesulphonate_mOase_FMN-dep"/>
</dbReference>
<dbReference type="InterPro" id="IPR011251">
    <property type="entry name" value="Luciferase-like_dom"/>
</dbReference>
<dbReference type="InterPro" id="IPR036661">
    <property type="entry name" value="Luciferase-like_sf"/>
</dbReference>
<dbReference type="InterPro" id="IPR050172">
    <property type="entry name" value="SsuD_RutA_monooxygenase"/>
</dbReference>
<dbReference type="NCBIfam" id="TIGR03565">
    <property type="entry name" value="alk_sulf_monoox"/>
    <property type="match status" value="1"/>
</dbReference>
<dbReference type="NCBIfam" id="NF001939">
    <property type="entry name" value="PRK00719.1"/>
    <property type="match status" value="1"/>
</dbReference>
<dbReference type="PANTHER" id="PTHR42847">
    <property type="entry name" value="ALKANESULFONATE MONOOXYGENASE"/>
    <property type="match status" value="1"/>
</dbReference>
<dbReference type="PANTHER" id="PTHR42847:SF4">
    <property type="entry name" value="ALKANESULFONATE MONOOXYGENASE-RELATED"/>
    <property type="match status" value="1"/>
</dbReference>
<dbReference type="Pfam" id="PF00296">
    <property type="entry name" value="Bac_luciferase"/>
    <property type="match status" value="1"/>
</dbReference>
<dbReference type="SUPFAM" id="SSF51679">
    <property type="entry name" value="Bacterial luciferase-like"/>
    <property type="match status" value="1"/>
</dbReference>
<evidence type="ECO:0000255" key="1">
    <source>
        <dbReference type="HAMAP-Rule" id="MF_01229"/>
    </source>
</evidence>